<reference key="1">
    <citation type="submission" date="2006-03" db="EMBL/GenBank/DDBJ databases">
        <authorList>
            <consortium name="Sanger Xenopus tropicalis EST/cDNA project"/>
        </authorList>
    </citation>
    <scope>NUCLEOTIDE SEQUENCE [LARGE SCALE MRNA]</scope>
    <source>
        <tissue>Egg</tissue>
    </source>
</reference>
<proteinExistence type="evidence at transcript level"/>
<accession>Q28GJ2</accession>
<name>CK054_XENTR</name>
<organism>
    <name type="scientific">Xenopus tropicalis</name>
    <name type="common">Western clawed frog</name>
    <name type="synonym">Silurana tropicalis</name>
    <dbReference type="NCBI Taxonomy" id="8364"/>
    <lineage>
        <taxon>Eukaryota</taxon>
        <taxon>Metazoa</taxon>
        <taxon>Chordata</taxon>
        <taxon>Craniata</taxon>
        <taxon>Vertebrata</taxon>
        <taxon>Euteleostomi</taxon>
        <taxon>Amphibia</taxon>
        <taxon>Batrachia</taxon>
        <taxon>Anura</taxon>
        <taxon>Pipoidea</taxon>
        <taxon>Pipidae</taxon>
        <taxon>Xenopodinae</taxon>
        <taxon>Xenopus</taxon>
        <taxon>Silurana</taxon>
    </lineage>
</organism>
<feature type="chain" id="PRO_0000246034" description="Ester hydrolase C11orf54 homolog">
    <location>
        <begin position="1"/>
        <end position="313"/>
    </location>
</feature>
<feature type="binding site" evidence="1">
    <location>
        <position position="264"/>
    </location>
    <ligand>
        <name>Zn(2+)</name>
        <dbReference type="ChEBI" id="CHEBI:29105"/>
        <note>catalytic</note>
    </ligand>
</feature>
<feature type="binding site" evidence="1">
    <location>
        <position position="266"/>
    </location>
    <ligand>
        <name>Zn(2+)</name>
        <dbReference type="ChEBI" id="CHEBI:29105"/>
        <note>catalytic</note>
    </ligand>
</feature>
<feature type="binding site" evidence="1">
    <location>
        <position position="276"/>
    </location>
    <ligand>
        <name>Zn(2+)</name>
        <dbReference type="ChEBI" id="CHEBI:29105"/>
        <note>catalytic</note>
    </ligand>
</feature>
<comment type="function">
    <text evidence="1">Exhibits ester hydrolase activity on the substrate p-nitrophenyl acetate, in vitro. May regulate DNA damage and repair by regulating HIF1A degradation via chaperone-mediated autophagy (CMA).</text>
</comment>
<comment type="cofactor">
    <cofactor evidence="1">
        <name>Zn(2+)</name>
        <dbReference type="ChEBI" id="CHEBI:29105"/>
    </cofactor>
</comment>
<comment type="subunit">
    <text evidence="1">Monomer.</text>
</comment>
<comment type="subcellular location">
    <subcellularLocation>
        <location evidence="1">Nucleus</location>
    </subcellularLocation>
    <subcellularLocation>
        <location evidence="1">Cytoplasm</location>
    </subcellularLocation>
    <text evidence="1">Mainly located in the cytoplasm.</text>
</comment>
<sequence>MENCSFHVPSLEEICSVLKSGLLKNFADVSVIVTECPDLSKEPFEFPVKGLCGKSRIADVGGVPYLVPKPRLDKVYNVNAVAKKIGLPGAYILGAGATSHKSLGMNAELIFSVQAENESIQAVNKSYVASVNPGDGSCLLEKYRDRNNDNDFGLLSNLYACEGKPGKVIEVSVKRRIGQDNFVSCMRKSLKTHYGEKAVGLGGTFLLKEGKAKLHVMPREYSACPLNTDEDVNGWLKFYEMKAPLICQSVFVSHDPGYDLRLEHTHCFSHHGEGGHYHYDTTPDTVEYLGYFHPAELLYRIDKPSATHMVGRD</sequence>
<protein>
    <recommendedName>
        <fullName>Ester hydrolase C11orf54 homolog</fullName>
        <ecNumber evidence="1">3.1.-.-</ecNumber>
    </recommendedName>
</protein>
<dbReference type="EC" id="3.1.-.-" evidence="1"/>
<dbReference type="EMBL" id="CR761368">
    <property type="protein sequence ID" value="CAJ81384.1"/>
    <property type="molecule type" value="mRNA"/>
</dbReference>
<dbReference type="SMR" id="Q28GJ2"/>
<dbReference type="FunCoup" id="Q28GJ2">
    <property type="interactions" value="1259"/>
</dbReference>
<dbReference type="STRING" id="8364.ENSXETP00000032531"/>
<dbReference type="PaxDb" id="8364-ENSXETP00000039959"/>
<dbReference type="DNASU" id="549100"/>
<dbReference type="KEGG" id="xtr:549100"/>
<dbReference type="CTD" id="549100"/>
<dbReference type="eggNOG" id="KOG4048">
    <property type="taxonomic scope" value="Eukaryota"/>
</dbReference>
<dbReference type="HOGENOM" id="CLU_055541_0_0_1"/>
<dbReference type="InParanoid" id="Q28GJ2"/>
<dbReference type="OrthoDB" id="5119241at2759"/>
<dbReference type="Proteomes" id="UP000008143">
    <property type="component" value="Chromosome 2"/>
</dbReference>
<dbReference type="GO" id="GO:0005737">
    <property type="term" value="C:cytoplasm"/>
    <property type="evidence" value="ECO:0000250"/>
    <property type="project" value="UniProtKB"/>
</dbReference>
<dbReference type="GO" id="GO:0005634">
    <property type="term" value="C:nucleus"/>
    <property type="evidence" value="ECO:0007669"/>
    <property type="project" value="UniProtKB-SubCell"/>
</dbReference>
<dbReference type="GO" id="GO:0016788">
    <property type="term" value="F:hydrolase activity, acting on ester bonds"/>
    <property type="evidence" value="ECO:0000250"/>
    <property type="project" value="UniProtKB"/>
</dbReference>
<dbReference type="GO" id="GO:0008270">
    <property type="term" value="F:zinc ion binding"/>
    <property type="evidence" value="ECO:0000250"/>
    <property type="project" value="UniProtKB"/>
</dbReference>
<dbReference type="GO" id="GO:0006974">
    <property type="term" value="P:DNA damage response"/>
    <property type="evidence" value="ECO:0000250"/>
    <property type="project" value="UniProtKB"/>
</dbReference>
<dbReference type="GO" id="GO:0006282">
    <property type="term" value="P:regulation of DNA repair"/>
    <property type="evidence" value="ECO:0000250"/>
    <property type="project" value="UniProtKB"/>
</dbReference>
<dbReference type="CDD" id="cd17298">
    <property type="entry name" value="DUF1907"/>
    <property type="match status" value="1"/>
</dbReference>
<dbReference type="InterPro" id="IPR015021">
    <property type="entry name" value="C11orf54_DUF1907"/>
</dbReference>
<dbReference type="PANTHER" id="PTHR13204:SF1">
    <property type="entry name" value="ESTER HYDROLASE C11ORF54"/>
    <property type="match status" value="1"/>
</dbReference>
<dbReference type="PANTHER" id="PTHR13204">
    <property type="entry name" value="PTD012 PROTEIN"/>
    <property type="match status" value="1"/>
</dbReference>
<dbReference type="Pfam" id="PF08925">
    <property type="entry name" value="DUF1907"/>
    <property type="match status" value="1"/>
</dbReference>
<dbReference type="SMART" id="SM01168">
    <property type="entry name" value="DUF1907"/>
    <property type="match status" value="1"/>
</dbReference>
<dbReference type="SUPFAM" id="SSF117856">
    <property type="entry name" value="AF0104/ALDC/Ptd012-like"/>
    <property type="match status" value="1"/>
</dbReference>
<gene>
    <name type="ORF">TEgg069a24.1</name>
</gene>
<keyword id="KW-0963">Cytoplasm</keyword>
<keyword id="KW-0378">Hydrolase</keyword>
<keyword id="KW-0479">Metal-binding</keyword>
<keyword id="KW-0539">Nucleus</keyword>
<keyword id="KW-1185">Reference proteome</keyword>
<keyword id="KW-0862">Zinc</keyword>
<evidence type="ECO:0000250" key="1">
    <source>
        <dbReference type="UniProtKB" id="Q9H0W9"/>
    </source>
</evidence>